<proteinExistence type="inferred from homology"/>
<sequence length="146" mass="15446">MKLHELKPAEGSRKVRNRVGRGTSSGNGKTSGRGQKGQKARSGGGVRLGFEGGQTPLFRRLPKRGFTNINAKEYAIVNLDQLNVFEDGAEVTPVVLIEAGIVKAEKSGIKILGNGELTKKLTVKAAKFSKSAEEAITAKGGSVEVI</sequence>
<protein>
    <recommendedName>
        <fullName evidence="1">Large ribosomal subunit protein uL15</fullName>
    </recommendedName>
    <alternativeName>
        <fullName evidence="3">50S ribosomal protein L15</fullName>
    </alternativeName>
</protein>
<name>RL15_STRP2</name>
<organism>
    <name type="scientific">Streptococcus pneumoniae serotype 2 (strain D39 / NCTC 7466)</name>
    <dbReference type="NCBI Taxonomy" id="373153"/>
    <lineage>
        <taxon>Bacteria</taxon>
        <taxon>Bacillati</taxon>
        <taxon>Bacillota</taxon>
        <taxon>Bacilli</taxon>
        <taxon>Lactobacillales</taxon>
        <taxon>Streptococcaceae</taxon>
        <taxon>Streptococcus</taxon>
    </lineage>
</organism>
<accession>Q04ML7</accession>
<reference key="1">
    <citation type="journal article" date="2007" name="J. Bacteriol.">
        <title>Genome sequence of Avery's virulent serotype 2 strain D39 of Streptococcus pneumoniae and comparison with that of unencapsulated laboratory strain R6.</title>
        <authorList>
            <person name="Lanie J.A."/>
            <person name="Ng W.-L."/>
            <person name="Kazmierczak K.M."/>
            <person name="Andrzejewski T.M."/>
            <person name="Davidsen T.M."/>
            <person name="Wayne K.J."/>
            <person name="Tettelin H."/>
            <person name="Glass J.I."/>
            <person name="Winkler M.E."/>
        </authorList>
    </citation>
    <scope>NUCLEOTIDE SEQUENCE [LARGE SCALE GENOMIC DNA]</scope>
    <source>
        <strain>D39 / NCTC 7466</strain>
    </source>
</reference>
<evidence type="ECO:0000255" key="1">
    <source>
        <dbReference type="HAMAP-Rule" id="MF_01341"/>
    </source>
</evidence>
<evidence type="ECO:0000256" key="2">
    <source>
        <dbReference type="SAM" id="MobiDB-lite"/>
    </source>
</evidence>
<evidence type="ECO:0000305" key="3"/>
<keyword id="KW-1185">Reference proteome</keyword>
<keyword id="KW-0687">Ribonucleoprotein</keyword>
<keyword id="KW-0689">Ribosomal protein</keyword>
<keyword id="KW-0694">RNA-binding</keyword>
<keyword id="KW-0699">rRNA-binding</keyword>
<gene>
    <name evidence="1" type="primary">rplO</name>
    <name type="ordered locus">SPD_0212</name>
</gene>
<comment type="function">
    <text evidence="1">Binds to the 23S rRNA.</text>
</comment>
<comment type="subunit">
    <text evidence="1">Part of the 50S ribosomal subunit.</text>
</comment>
<comment type="similarity">
    <text evidence="1">Belongs to the universal ribosomal protein uL15 family.</text>
</comment>
<feature type="chain" id="PRO_1000054551" description="Large ribosomal subunit protein uL15">
    <location>
        <begin position="1"/>
        <end position="146"/>
    </location>
</feature>
<feature type="region of interest" description="Disordered" evidence="2">
    <location>
        <begin position="1"/>
        <end position="51"/>
    </location>
</feature>
<feature type="compositionally biased region" description="Basic and acidic residues" evidence="2">
    <location>
        <begin position="1"/>
        <end position="13"/>
    </location>
</feature>
<feature type="compositionally biased region" description="Gly residues" evidence="2">
    <location>
        <begin position="23"/>
        <end position="35"/>
    </location>
</feature>
<feature type="compositionally biased region" description="Gly residues" evidence="2">
    <location>
        <begin position="42"/>
        <end position="51"/>
    </location>
</feature>
<dbReference type="EMBL" id="CP000410">
    <property type="protein sequence ID" value="ABJ53681.1"/>
    <property type="molecule type" value="Genomic_DNA"/>
</dbReference>
<dbReference type="RefSeq" id="WP_000766087.1">
    <property type="nucleotide sequence ID" value="NZ_JAMLJR010000002.1"/>
</dbReference>
<dbReference type="SMR" id="Q04ML7"/>
<dbReference type="PaxDb" id="373153-SPD_0212"/>
<dbReference type="GeneID" id="45652290"/>
<dbReference type="KEGG" id="spd:SPD_0212"/>
<dbReference type="eggNOG" id="COG0200">
    <property type="taxonomic scope" value="Bacteria"/>
</dbReference>
<dbReference type="HOGENOM" id="CLU_055188_4_2_9"/>
<dbReference type="BioCyc" id="SPNE373153:G1G6V-235-MONOMER"/>
<dbReference type="Proteomes" id="UP000001452">
    <property type="component" value="Chromosome"/>
</dbReference>
<dbReference type="GO" id="GO:0022625">
    <property type="term" value="C:cytosolic large ribosomal subunit"/>
    <property type="evidence" value="ECO:0007669"/>
    <property type="project" value="TreeGrafter"/>
</dbReference>
<dbReference type="GO" id="GO:0019843">
    <property type="term" value="F:rRNA binding"/>
    <property type="evidence" value="ECO:0007669"/>
    <property type="project" value="UniProtKB-UniRule"/>
</dbReference>
<dbReference type="GO" id="GO:0003735">
    <property type="term" value="F:structural constituent of ribosome"/>
    <property type="evidence" value="ECO:0007669"/>
    <property type="project" value="InterPro"/>
</dbReference>
<dbReference type="GO" id="GO:0006412">
    <property type="term" value="P:translation"/>
    <property type="evidence" value="ECO:0007669"/>
    <property type="project" value="UniProtKB-UniRule"/>
</dbReference>
<dbReference type="FunFam" id="3.100.10.10:FF:000004">
    <property type="entry name" value="50S ribosomal protein L15"/>
    <property type="match status" value="1"/>
</dbReference>
<dbReference type="Gene3D" id="3.100.10.10">
    <property type="match status" value="1"/>
</dbReference>
<dbReference type="HAMAP" id="MF_01341">
    <property type="entry name" value="Ribosomal_uL15"/>
    <property type="match status" value="1"/>
</dbReference>
<dbReference type="InterPro" id="IPR030878">
    <property type="entry name" value="Ribosomal_uL15"/>
</dbReference>
<dbReference type="InterPro" id="IPR021131">
    <property type="entry name" value="Ribosomal_uL15/eL18"/>
</dbReference>
<dbReference type="InterPro" id="IPR036227">
    <property type="entry name" value="Ribosomal_uL15/eL18_sf"/>
</dbReference>
<dbReference type="InterPro" id="IPR005749">
    <property type="entry name" value="Ribosomal_uL15_bac-type"/>
</dbReference>
<dbReference type="InterPro" id="IPR001196">
    <property type="entry name" value="Ribosomal_uL15_CS"/>
</dbReference>
<dbReference type="NCBIfam" id="TIGR01071">
    <property type="entry name" value="rplO_bact"/>
    <property type="match status" value="1"/>
</dbReference>
<dbReference type="PANTHER" id="PTHR12934">
    <property type="entry name" value="50S RIBOSOMAL PROTEIN L15"/>
    <property type="match status" value="1"/>
</dbReference>
<dbReference type="PANTHER" id="PTHR12934:SF11">
    <property type="entry name" value="LARGE RIBOSOMAL SUBUNIT PROTEIN UL15M"/>
    <property type="match status" value="1"/>
</dbReference>
<dbReference type="Pfam" id="PF00828">
    <property type="entry name" value="Ribosomal_L27A"/>
    <property type="match status" value="1"/>
</dbReference>
<dbReference type="SUPFAM" id="SSF52080">
    <property type="entry name" value="Ribosomal proteins L15p and L18e"/>
    <property type="match status" value="1"/>
</dbReference>
<dbReference type="PROSITE" id="PS00475">
    <property type="entry name" value="RIBOSOMAL_L15"/>
    <property type="match status" value="1"/>
</dbReference>